<gene>
    <name evidence="1" type="primary">psbC</name>
</gene>
<keyword id="KW-0007">Acetylation</keyword>
<keyword id="KW-0148">Chlorophyll</keyword>
<keyword id="KW-0150">Chloroplast</keyword>
<keyword id="KW-0157">Chromophore</keyword>
<keyword id="KW-0464">Manganese</keyword>
<keyword id="KW-0472">Membrane</keyword>
<keyword id="KW-0479">Metal-binding</keyword>
<keyword id="KW-0597">Phosphoprotein</keyword>
<keyword id="KW-0602">Photosynthesis</keyword>
<keyword id="KW-0604">Photosystem II</keyword>
<keyword id="KW-0934">Plastid</keyword>
<keyword id="KW-0793">Thylakoid</keyword>
<keyword id="KW-0812">Transmembrane</keyword>
<keyword id="KW-1133">Transmembrane helix</keyword>
<name>PSBC_TETOB</name>
<comment type="function">
    <text evidence="1">One of the components of the core complex of photosystem II (PSII). It binds chlorophyll and helps catalyze the primary light-induced photochemical processes of PSII. PSII is a light-driven water:plastoquinone oxidoreductase, using light energy to abstract electrons from H(2)O, generating O(2) and a proton gradient subsequently used for ATP formation.</text>
</comment>
<comment type="cofactor">
    <text evidence="1">Binds multiple chlorophylls and provides some of the ligands for the Ca-4Mn-5O cluster of the oxygen-evolving complex. It may also provide a ligand for a Cl- that is required for oxygen evolution. PSII binds additional chlorophylls, carotenoids and specific lipids.</text>
</comment>
<comment type="subunit">
    <text evidence="1">PSII is composed of 1 copy each of membrane proteins PsbA, PsbB, PsbC, PsbD, PsbE, PsbF, PsbH, PsbI, PsbJ, PsbK, PsbL, PsbM, PsbT, PsbX, PsbY, PsbZ, Psb30/Ycf12, at least 3 peripheral proteins of the oxygen-evolving complex and a large number of cofactors. It forms dimeric complexes.</text>
</comment>
<comment type="subcellular location">
    <subcellularLocation>
        <location evidence="1">Plastid</location>
        <location evidence="1">Chloroplast thylakoid membrane</location>
        <topology evidence="1">Multi-pass membrane protein</topology>
    </subcellularLocation>
</comment>
<comment type="similarity">
    <text evidence="1">Belongs to the PsbB/PsbC family. PsbC subfamily.</text>
</comment>
<reference key="1">
    <citation type="journal article" date="2006" name="BMC Evol. Biol.">
        <title>The complete chloroplast genome sequence of the chlorophycean green alga Scenedesmus obliquus reveals a compact gene organization and a biased distribution of genes on the two DNA strands.</title>
        <authorList>
            <person name="de Cambiaire J.-C."/>
            <person name="Otis C."/>
            <person name="Lemieux C."/>
            <person name="Turmel M."/>
        </authorList>
    </citation>
    <scope>NUCLEOTIDE SEQUENCE [LARGE SCALE GENOMIC DNA]</scope>
    <source>
        <strain>UTEX 393</strain>
    </source>
</reference>
<accession>Q1KVY2</accession>
<evidence type="ECO:0000255" key="1">
    <source>
        <dbReference type="HAMAP-Rule" id="MF_01496"/>
    </source>
</evidence>
<sequence length="461" mass="50553">METLFNGTLTVGGRDQESTGFAWWAGNARLINLSGKLLGAHVAHAGLIVYWAGAMNLFEVAHFVPEKPMYEQGLILLPHLATLGYGVGPGGEVIDTFPYFVSGVLHLISSAVLGFGGVYHSLIGPETLEESFPFFGYVWKDKNKMTNILGYHLIMLGIGAWLLVWKAMYFGGVYDTWAPGGGDVRIITNPTTNAAVVFGYLLKSPFGGDGWIVSVDNMEDIIGGHIWIGTLCILGGLWHIYTTPWPWARRAFVWSGEAYLSYSLGAISLMGFIACCMSWFNNTAYPSEFYGPTGPEASQSQAFTFLVRDQRLGANVASAQGPTGLGKYLMRSPTGEIIFGGETMRFWDFRGPWLEPLRGPNGLDLNKLKNDIQPWQERRAAEYMTHAPLGSLNSVGGVATEINAVNFVSPRSWLATSHFVLGFFFFVGHLWHAGRARAAAAGFEKGIDRLDEPVLSMRPLD</sequence>
<dbReference type="EMBL" id="DQ396875">
    <property type="protein sequence ID" value="ABD48224.1"/>
    <property type="molecule type" value="Genomic_DNA"/>
</dbReference>
<dbReference type="RefSeq" id="YP_635942.1">
    <property type="nucleotide sequence ID" value="NC_008101.1"/>
</dbReference>
<dbReference type="SMR" id="Q1KVY2"/>
<dbReference type="GeneID" id="4099792"/>
<dbReference type="GO" id="GO:0009535">
    <property type="term" value="C:chloroplast thylakoid membrane"/>
    <property type="evidence" value="ECO:0007669"/>
    <property type="project" value="UniProtKB-SubCell"/>
</dbReference>
<dbReference type="GO" id="GO:0009523">
    <property type="term" value="C:photosystem II"/>
    <property type="evidence" value="ECO:0007669"/>
    <property type="project" value="UniProtKB-KW"/>
</dbReference>
<dbReference type="GO" id="GO:0016168">
    <property type="term" value="F:chlorophyll binding"/>
    <property type="evidence" value="ECO:0007669"/>
    <property type="project" value="UniProtKB-UniRule"/>
</dbReference>
<dbReference type="GO" id="GO:0045156">
    <property type="term" value="F:electron transporter, transferring electrons within the cyclic electron transport pathway of photosynthesis activity"/>
    <property type="evidence" value="ECO:0007669"/>
    <property type="project" value="InterPro"/>
</dbReference>
<dbReference type="GO" id="GO:0046872">
    <property type="term" value="F:metal ion binding"/>
    <property type="evidence" value="ECO:0007669"/>
    <property type="project" value="UniProtKB-KW"/>
</dbReference>
<dbReference type="GO" id="GO:0009772">
    <property type="term" value="P:photosynthetic electron transport in photosystem II"/>
    <property type="evidence" value="ECO:0007669"/>
    <property type="project" value="InterPro"/>
</dbReference>
<dbReference type="FunFam" id="1.10.10.670:FF:000001">
    <property type="entry name" value="Photosystem II CP43 reaction center protein"/>
    <property type="match status" value="1"/>
</dbReference>
<dbReference type="Gene3D" id="1.10.10.670">
    <property type="entry name" value="photosystem ii from thermosynechococcus elongatus"/>
    <property type="match status" value="1"/>
</dbReference>
<dbReference type="HAMAP" id="MF_01496">
    <property type="entry name" value="PSII_PsbC_CP43"/>
    <property type="match status" value="1"/>
</dbReference>
<dbReference type="InterPro" id="IPR000932">
    <property type="entry name" value="PS_antenna-like"/>
</dbReference>
<dbReference type="InterPro" id="IPR036001">
    <property type="entry name" value="PS_II_antenna-like_sf"/>
</dbReference>
<dbReference type="InterPro" id="IPR005869">
    <property type="entry name" value="PSII_PsbC"/>
</dbReference>
<dbReference type="InterPro" id="IPR044900">
    <property type="entry name" value="PSII_PsbC_sf"/>
</dbReference>
<dbReference type="NCBIfam" id="TIGR01153">
    <property type="entry name" value="psbC"/>
    <property type="match status" value="1"/>
</dbReference>
<dbReference type="Pfam" id="PF00421">
    <property type="entry name" value="PSII"/>
    <property type="match status" value="1"/>
</dbReference>
<dbReference type="SUPFAM" id="SSF161077">
    <property type="entry name" value="Photosystem II antenna protein-like"/>
    <property type="match status" value="1"/>
</dbReference>
<protein>
    <recommendedName>
        <fullName evidence="1">Photosystem II CP43 reaction center protein</fullName>
    </recommendedName>
    <alternativeName>
        <fullName evidence="1">PSII 43 kDa protein</fullName>
    </alternativeName>
    <alternativeName>
        <fullName evidence="1">Protein CP-43</fullName>
    </alternativeName>
</protein>
<proteinExistence type="inferred from homology"/>
<geneLocation type="chloroplast"/>
<feature type="propeptide" id="PRO_0000431206" evidence="1">
    <location>
        <begin position="1"/>
        <end position="2"/>
    </location>
</feature>
<feature type="chain" id="PRO_0000361491" description="Photosystem II CP43 reaction center protein" evidence="1">
    <location>
        <begin position="3"/>
        <end position="461"/>
    </location>
</feature>
<feature type="transmembrane region" description="Helical" evidence="1">
    <location>
        <begin position="57"/>
        <end position="81"/>
    </location>
</feature>
<feature type="transmembrane region" description="Helical" evidence="1">
    <location>
        <begin position="122"/>
        <end position="143"/>
    </location>
</feature>
<feature type="transmembrane region" description="Helical" evidence="1">
    <location>
        <begin position="166"/>
        <end position="188"/>
    </location>
</feature>
<feature type="transmembrane region" description="Helical" evidence="1">
    <location>
        <begin position="243"/>
        <end position="263"/>
    </location>
</feature>
<feature type="transmembrane region" description="Helical" evidence="1">
    <location>
        <begin position="279"/>
        <end position="300"/>
    </location>
</feature>
<feature type="transmembrane region" description="Helical" evidence="1">
    <location>
        <begin position="435"/>
        <end position="459"/>
    </location>
</feature>
<feature type="binding site" evidence="1">
    <location>
        <position position="355"/>
    </location>
    <ligand>
        <name>[CaMn4O5] cluster</name>
        <dbReference type="ChEBI" id="CHEBI:189552"/>
    </ligand>
</feature>
<feature type="modified residue" description="N-acetylthreonine" evidence="1">
    <location>
        <position position="3"/>
    </location>
</feature>
<feature type="modified residue" description="Phosphothreonine" evidence="1">
    <location>
        <position position="3"/>
    </location>
</feature>
<organism>
    <name type="scientific">Tetradesmus obliquus</name>
    <name type="common">Green alga</name>
    <name type="synonym">Acutodesmus obliquus</name>
    <dbReference type="NCBI Taxonomy" id="3088"/>
    <lineage>
        <taxon>Eukaryota</taxon>
        <taxon>Viridiplantae</taxon>
        <taxon>Chlorophyta</taxon>
        <taxon>core chlorophytes</taxon>
        <taxon>Chlorophyceae</taxon>
        <taxon>CS clade</taxon>
        <taxon>Sphaeropleales</taxon>
        <taxon>Scenedesmaceae</taxon>
        <taxon>Tetradesmus</taxon>
    </lineage>
</organism>